<comment type="function">
    <text evidence="6 8 9 10 11 12">Serine/threonine-protein kinase that detects bacterial pathogen-associated molecular pattern metabolites (PAMPs) and initiates an innate immune response, a critical step for pathogen elimination and engagement of adaptive immunity (PubMed:28222186, PubMed:28877472, PubMed:30111836). Specifically recognizes and binds ADP-D-glycero-beta-D-manno-heptose (ADP-Heptose), a potent PAMP present in all Gram-negative and some Gram-positive bacteria (PubMed:30111836). ADP-Heptose-binding stimulates its kinase activity to phosphorylate and activate TIFA, triggering pro-inflammatory NF-kappa-B signaling (PubMed:30111836). May be involved in monosodium urate monohydrate (MSU)-induced inflammation by mediating phosphorylation of unconventional myosin MYO9A (PubMed:27169898). May also play a role in apical protein transport by mediating phosphorylation of unconventional myosin MYO1A (PubMed:15883161). May play a role in ciliogenesis (PubMed:30967659).</text>
</comment>
<comment type="catalytic activity">
    <reaction evidence="8 11">
        <text>L-seryl-[protein] + ATP = O-phospho-L-seryl-[protein] + ADP + H(+)</text>
        <dbReference type="Rhea" id="RHEA:17989"/>
        <dbReference type="Rhea" id="RHEA-COMP:9863"/>
        <dbReference type="Rhea" id="RHEA-COMP:11604"/>
        <dbReference type="ChEBI" id="CHEBI:15378"/>
        <dbReference type="ChEBI" id="CHEBI:29999"/>
        <dbReference type="ChEBI" id="CHEBI:30616"/>
        <dbReference type="ChEBI" id="CHEBI:83421"/>
        <dbReference type="ChEBI" id="CHEBI:456216"/>
        <dbReference type="EC" id="2.7.11.1"/>
    </reaction>
</comment>
<comment type="catalytic activity">
    <reaction evidence="8 11">
        <text>L-threonyl-[protein] + ATP = O-phospho-L-threonyl-[protein] + ADP + H(+)</text>
        <dbReference type="Rhea" id="RHEA:46608"/>
        <dbReference type="Rhea" id="RHEA-COMP:11060"/>
        <dbReference type="Rhea" id="RHEA-COMP:11605"/>
        <dbReference type="ChEBI" id="CHEBI:15378"/>
        <dbReference type="ChEBI" id="CHEBI:30013"/>
        <dbReference type="ChEBI" id="CHEBI:30616"/>
        <dbReference type="ChEBI" id="CHEBI:61977"/>
        <dbReference type="ChEBI" id="CHEBI:456216"/>
        <dbReference type="EC" id="2.7.11.1"/>
    </reaction>
</comment>
<comment type="activity regulation">
    <text evidence="11">Serine/threonine-protein kinase activity is stimulated upon ADP-D-glycero-beta-D-manno-heptose (ADP-Heptose)-binding.</text>
</comment>
<comment type="interaction">
    <interactant intactId="EBI-6423957">
        <id>Q96QP1</id>
    </interactant>
    <interactant intactId="EBI-356498">
        <id>P62258</id>
        <label>YWHAE</label>
    </interactant>
    <organismsDiffer>false</organismsDiffer>
    <experiments>2</experiments>
</comment>
<comment type="subcellular location">
    <subcellularLocation>
        <location evidence="11">Cytoplasm</location>
        <location evidence="11">Cytosol</location>
    </subcellularLocation>
    <subcellularLocation>
        <location evidence="12">Cytoplasm</location>
        <location evidence="12">Cytoskeleton</location>
        <location evidence="12">Spindle pole</location>
    </subcellularLocation>
    <subcellularLocation>
        <location evidence="12">Cytoplasm</location>
        <location evidence="12">Cytoskeleton</location>
        <location evidence="12">Microtubule organizing center</location>
        <location evidence="12">Centrosome</location>
    </subcellularLocation>
    <subcellularLocation>
        <location evidence="12">Cell projection</location>
        <location evidence="12">Cilium</location>
    </subcellularLocation>
    <text evidence="12">Localized at the base of primary cilia.</text>
</comment>
<comment type="alternative products">
    <event type="alternative splicing"/>
    <isoform>
        <id>Q96QP1-1</id>
        <name>1</name>
        <sequence type="displayed"/>
    </isoform>
    <isoform>
        <id>Q96QP1-2</id>
        <name>2</name>
        <sequence type="described" ref="VSP_044735"/>
    </isoform>
</comment>
<comment type="tissue specificity">
    <text evidence="4 12">Highly expressed in liver. Expressed in the optic nerve and retinal pigmented epithelium. Lower expression is observed in the macula and extramacular retina (PubMed:30967659).</text>
</comment>
<comment type="disease" evidence="12 13">
    <disease id="DI-05949">
        <name>Retinal dystrophy, optic nerve edema, splenomegaly, anhidrosis, and migraine headache syndrome</name>
        <acronym>ROSAH</acronym>
        <description>An autosomal dominant disorder characterized by decreased vision associated with optic nerve edema, evident in childhood. Low-grade ocular inflammation is common in affected individuals. Later in childhood or the second decade of life, patients have increasing visual impairment, abnormal cone function and loss of rod function. By the third decade of life, visual acuity ranges from counting fingers to no light perception. Patients also show anhidrosis, splenomegaly, mild pancytopenia, and most experience headaches that may be migraine-like in nature.</description>
        <dbReference type="MIM" id="614979"/>
    </disease>
    <text>The disease is caused by variants affecting the gene represented in this entry.</text>
</comment>
<comment type="similarity">
    <text evidence="19">Belongs to the protein kinase superfamily. Alpha-type protein kinase family. ALPK subfamily.</text>
</comment>
<comment type="caution">
    <text evidence="9 10 11">D-glycero-beta-D-manno-heptose 1,7-bisphosphate (HBP) was initially thought to constitute the bacterial pathogen-associated molecular pattern metabolite (PAMP) triggering the ALPK1-TIFA innate immunune response (PubMed:28222186, PubMed:28877472). It was however shown that ADP-D-glycero-beta-D-manno-heptose (ADP-Heptose) constitutes the main PAMP that activates the kinase activity of ALPK1 (PubMed:30111836).</text>
</comment>
<comment type="sequence caution" evidence="19">
    <conflict type="erroneous initiation">
        <sequence resource="EMBL-CDS" id="BAC85140"/>
    </conflict>
    <text>Truncated N-terminus.</text>
</comment>
<comment type="sequence caution" evidence="19">
    <conflict type="frameshift">
        <sequence resource="EMBL-CDS" id="BAC85140"/>
    </conflict>
</comment>
<comment type="sequence caution" evidence="19">
    <conflict type="miscellaneous discrepancy">
        <sequence resource="EMBL-CDS" id="BAC85140"/>
    </conflict>
    <text>Intron retention.</text>
</comment>
<comment type="sequence caution" evidence="19">
    <conflict type="frameshift">
        <sequence resource="EMBL" id="BC060780"/>
    </conflict>
</comment>
<organism>
    <name type="scientific">Homo sapiens</name>
    <name type="common">Human</name>
    <dbReference type="NCBI Taxonomy" id="9606"/>
    <lineage>
        <taxon>Eukaryota</taxon>
        <taxon>Metazoa</taxon>
        <taxon>Chordata</taxon>
        <taxon>Craniata</taxon>
        <taxon>Vertebrata</taxon>
        <taxon>Euteleostomi</taxon>
        <taxon>Mammalia</taxon>
        <taxon>Eutheria</taxon>
        <taxon>Euarchontoglires</taxon>
        <taxon>Primates</taxon>
        <taxon>Haplorrhini</taxon>
        <taxon>Catarrhini</taxon>
        <taxon>Hominidae</taxon>
        <taxon>Homo</taxon>
    </lineage>
</organism>
<reference key="1">
    <citation type="journal article" date="1999" name="Curr. Biol.">
        <title>Alpha-kinases: a new class of protein kinases with a novel catalytic domain.</title>
        <authorList>
            <person name="Ryazanov A.G."/>
            <person name="Pavur K.S."/>
            <person name="Dorovkov M.V."/>
        </authorList>
    </citation>
    <scope>NUCLEOTIDE SEQUENCE [MRNA] (ISOFORM 1)</scope>
    <scope>VARIANTS ASP-565; ARG-642; ILE-732 AND THR-861</scope>
</reference>
<reference key="2">
    <citation type="journal article" date="2004" name="Nat. Genet.">
        <title>Complete sequencing and characterization of 21,243 full-length human cDNAs.</title>
        <authorList>
            <person name="Ota T."/>
            <person name="Suzuki Y."/>
            <person name="Nishikawa T."/>
            <person name="Otsuki T."/>
            <person name="Sugiyama T."/>
            <person name="Irie R."/>
            <person name="Wakamatsu A."/>
            <person name="Hayashi K."/>
            <person name="Sato H."/>
            <person name="Nagai K."/>
            <person name="Kimura K."/>
            <person name="Makita H."/>
            <person name="Sekine M."/>
            <person name="Obayashi M."/>
            <person name="Nishi T."/>
            <person name="Shibahara T."/>
            <person name="Tanaka T."/>
            <person name="Ishii S."/>
            <person name="Yamamoto J."/>
            <person name="Saito K."/>
            <person name="Kawai Y."/>
            <person name="Isono Y."/>
            <person name="Nakamura Y."/>
            <person name="Nagahari K."/>
            <person name="Murakami K."/>
            <person name="Yasuda T."/>
            <person name="Iwayanagi T."/>
            <person name="Wagatsuma M."/>
            <person name="Shiratori A."/>
            <person name="Sudo H."/>
            <person name="Hosoiri T."/>
            <person name="Kaku Y."/>
            <person name="Kodaira H."/>
            <person name="Kondo H."/>
            <person name="Sugawara M."/>
            <person name="Takahashi M."/>
            <person name="Kanda K."/>
            <person name="Yokoi T."/>
            <person name="Furuya T."/>
            <person name="Kikkawa E."/>
            <person name="Omura Y."/>
            <person name="Abe K."/>
            <person name="Kamihara K."/>
            <person name="Katsuta N."/>
            <person name="Sato K."/>
            <person name="Tanikawa M."/>
            <person name="Yamazaki M."/>
            <person name="Ninomiya K."/>
            <person name="Ishibashi T."/>
            <person name="Yamashita H."/>
            <person name="Murakawa K."/>
            <person name="Fujimori K."/>
            <person name="Tanai H."/>
            <person name="Kimata M."/>
            <person name="Watanabe M."/>
            <person name="Hiraoka S."/>
            <person name="Chiba Y."/>
            <person name="Ishida S."/>
            <person name="Ono Y."/>
            <person name="Takiguchi S."/>
            <person name="Watanabe S."/>
            <person name="Yosida M."/>
            <person name="Hotuta T."/>
            <person name="Kusano J."/>
            <person name="Kanehori K."/>
            <person name="Takahashi-Fujii A."/>
            <person name="Hara H."/>
            <person name="Tanase T.-O."/>
            <person name="Nomura Y."/>
            <person name="Togiya S."/>
            <person name="Komai F."/>
            <person name="Hara R."/>
            <person name="Takeuchi K."/>
            <person name="Arita M."/>
            <person name="Imose N."/>
            <person name="Musashino K."/>
            <person name="Yuuki H."/>
            <person name="Oshima A."/>
            <person name="Sasaki N."/>
            <person name="Aotsuka S."/>
            <person name="Yoshikawa Y."/>
            <person name="Matsunawa H."/>
            <person name="Ichihara T."/>
            <person name="Shiohata N."/>
            <person name="Sano S."/>
            <person name="Moriya S."/>
            <person name="Momiyama H."/>
            <person name="Satoh N."/>
            <person name="Takami S."/>
            <person name="Terashima Y."/>
            <person name="Suzuki O."/>
            <person name="Nakagawa S."/>
            <person name="Senoh A."/>
            <person name="Mizoguchi H."/>
            <person name="Goto Y."/>
            <person name="Shimizu F."/>
            <person name="Wakebe H."/>
            <person name="Hishigaki H."/>
            <person name="Watanabe T."/>
            <person name="Sugiyama A."/>
            <person name="Takemoto M."/>
            <person name="Kawakami B."/>
            <person name="Yamazaki M."/>
            <person name="Watanabe K."/>
            <person name="Kumagai A."/>
            <person name="Itakura S."/>
            <person name="Fukuzumi Y."/>
            <person name="Fujimori Y."/>
            <person name="Komiyama M."/>
            <person name="Tashiro H."/>
            <person name="Tanigami A."/>
            <person name="Fujiwara T."/>
            <person name="Ono T."/>
            <person name="Yamada K."/>
            <person name="Fujii Y."/>
            <person name="Ozaki K."/>
            <person name="Hirao M."/>
            <person name="Ohmori Y."/>
            <person name="Kawabata A."/>
            <person name="Hikiji T."/>
            <person name="Kobatake N."/>
            <person name="Inagaki H."/>
            <person name="Ikema Y."/>
            <person name="Okamoto S."/>
            <person name="Okitani R."/>
            <person name="Kawakami T."/>
            <person name="Noguchi S."/>
            <person name="Itoh T."/>
            <person name="Shigeta K."/>
            <person name="Senba T."/>
            <person name="Matsumura K."/>
            <person name="Nakajima Y."/>
            <person name="Mizuno T."/>
            <person name="Morinaga M."/>
            <person name="Sasaki M."/>
            <person name="Togashi T."/>
            <person name="Oyama M."/>
            <person name="Hata H."/>
            <person name="Watanabe M."/>
            <person name="Komatsu T."/>
            <person name="Mizushima-Sugano J."/>
            <person name="Satoh T."/>
            <person name="Shirai Y."/>
            <person name="Takahashi Y."/>
            <person name="Nakagawa K."/>
            <person name="Okumura K."/>
            <person name="Nagase T."/>
            <person name="Nomura N."/>
            <person name="Kikuchi H."/>
            <person name="Masuho Y."/>
            <person name="Yamashita R."/>
            <person name="Nakai K."/>
            <person name="Yada T."/>
            <person name="Nakamura Y."/>
            <person name="Ohara O."/>
            <person name="Isogai T."/>
            <person name="Sugano S."/>
        </authorList>
    </citation>
    <scope>NUCLEOTIDE SEQUENCE [LARGE SCALE MRNA] (ISOFORM 2)</scope>
    <scope>VARIANTS ASP-565; ARG-642; ASP-681; ILE-732 AND THR-861</scope>
    <source>
        <tissue>Uterus</tissue>
    </source>
</reference>
<reference key="3">
    <citation type="journal article" date="2005" name="Nature">
        <title>Generation and annotation of the DNA sequences of human chromosomes 2 and 4.</title>
        <authorList>
            <person name="Hillier L.W."/>
            <person name="Graves T.A."/>
            <person name="Fulton R.S."/>
            <person name="Fulton L.A."/>
            <person name="Pepin K.H."/>
            <person name="Minx P."/>
            <person name="Wagner-McPherson C."/>
            <person name="Layman D."/>
            <person name="Wylie K."/>
            <person name="Sekhon M."/>
            <person name="Becker M.C."/>
            <person name="Fewell G.A."/>
            <person name="Delehaunty K.D."/>
            <person name="Miner T.L."/>
            <person name="Nash W.E."/>
            <person name="Kremitzki C."/>
            <person name="Oddy L."/>
            <person name="Du H."/>
            <person name="Sun H."/>
            <person name="Bradshaw-Cordum H."/>
            <person name="Ali J."/>
            <person name="Carter J."/>
            <person name="Cordes M."/>
            <person name="Harris A."/>
            <person name="Isak A."/>
            <person name="van Brunt A."/>
            <person name="Nguyen C."/>
            <person name="Du F."/>
            <person name="Courtney L."/>
            <person name="Kalicki J."/>
            <person name="Ozersky P."/>
            <person name="Abbott S."/>
            <person name="Armstrong J."/>
            <person name="Belter E.A."/>
            <person name="Caruso L."/>
            <person name="Cedroni M."/>
            <person name="Cotton M."/>
            <person name="Davidson T."/>
            <person name="Desai A."/>
            <person name="Elliott G."/>
            <person name="Erb T."/>
            <person name="Fronick C."/>
            <person name="Gaige T."/>
            <person name="Haakenson W."/>
            <person name="Haglund K."/>
            <person name="Holmes A."/>
            <person name="Harkins R."/>
            <person name="Kim K."/>
            <person name="Kruchowski S.S."/>
            <person name="Strong C.M."/>
            <person name="Grewal N."/>
            <person name="Goyea E."/>
            <person name="Hou S."/>
            <person name="Levy A."/>
            <person name="Martinka S."/>
            <person name="Mead K."/>
            <person name="McLellan M.D."/>
            <person name="Meyer R."/>
            <person name="Randall-Maher J."/>
            <person name="Tomlinson C."/>
            <person name="Dauphin-Kohlberg S."/>
            <person name="Kozlowicz-Reilly A."/>
            <person name="Shah N."/>
            <person name="Swearengen-Shahid S."/>
            <person name="Snider J."/>
            <person name="Strong J.T."/>
            <person name="Thompson J."/>
            <person name="Yoakum M."/>
            <person name="Leonard S."/>
            <person name="Pearman C."/>
            <person name="Trani L."/>
            <person name="Radionenko M."/>
            <person name="Waligorski J.E."/>
            <person name="Wang C."/>
            <person name="Rock S.M."/>
            <person name="Tin-Wollam A.-M."/>
            <person name="Maupin R."/>
            <person name="Latreille P."/>
            <person name="Wendl M.C."/>
            <person name="Yang S.-P."/>
            <person name="Pohl C."/>
            <person name="Wallis J.W."/>
            <person name="Spieth J."/>
            <person name="Bieri T.A."/>
            <person name="Berkowicz N."/>
            <person name="Nelson J.O."/>
            <person name="Osborne J."/>
            <person name="Ding L."/>
            <person name="Meyer R."/>
            <person name="Sabo A."/>
            <person name="Shotland Y."/>
            <person name="Sinha P."/>
            <person name="Wohldmann P.E."/>
            <person name="Cook L.L."/>
            <person name="Hickenbotham M.T."/>
            <person name="Eldred J."/>
            <person name="Williams D."/>
            <person name="Jones T.A."/>
            <person name="She X."/>
            <person name="Ciccarelli F.D."/>
            <person name="Izaurralde E."/>
            <person name="Taylor J."/>
            <person name="Schmutz J."/>
            <person name="Myers R.M."/>
            <person name="Cox D.R."/>
            <person name="Huang X."/>
            <person name="McPherson J.D."/>
            <person name="Mardis E.R."/>
            <person name="Clifton S.W."/>
            <person name="Warren W.C."/>
            <person name="Chinwalla A.T."/>
            <person name="Eddy S.R."/>
            <person name="Marra M.A."/>
            <person name="Ovcharenko I."/>
            <person name="Furey T.S."/>
            <person name="Miller W."/>
            <person name="Eichler E.E."/>
            <person name="Bork P."/>
            <person name="Suyama M."/>
            <person name="Torrents D."/>
            <person name="Waterston R.H."/>
            <person name="Wilson R.K."/>
        </authorList>
    </citation>
    <scope>NUCLEOTIDE SEQUENCE [LARGE SCALE GENOMIC DNA]</scope>
</reference>
<reference key="4">
    <citation type="journal article" date="2004" name="Genome Res.">
        <title>The status, quality, and expansion of the NIH full-length cDNA project: the Mammalian Gene Collection (MGC).</title>
        <authorList>
            <consortium name="The MGC Project Team"/>
        </authorList>
    </citation>
    <scope>NUCLEOTIDE SEQUENCE [LARGE SCALE MRNA] (ISOFORM 1)</scope>
    <source>
        <tissue>Placenta</tissue>
    </source>
</reference>
<reference key="5">
    <citation type="submission" date="2003-09" db="EMBL/GenBank/DDBJ databases">
        <title>The nucleotide sequence of a long cDNA clone isolated from human spleen.</title>
        <authorList>
            <person name="Jikuya H."/>
            <person name="Takano J."/>
            <person name="Kikuno R."/>
            <person name="Nagase T."/>
            <person name="Ohara O."/>
        </authorList>
    </citation>
    <scope>NUCLEOTIDE SEQUENCE [LARGE SCALE MRNA] OF 77-1244 (ISOFORM 1)</scope>
    <scope>VARIANTS ASP-565; ARG-642; ILE-732 AND THR-861</scope>
    <source>
        <tissue>Spleen</tissue>
    </source>
</reference>
<reference key="6">
    <citation type="journal article" date="2000" name="DNA Res.">
        <title>Prediction of the coding sequences of unidentified human genes. XVII. The complete sequences of 100 new cDNA clones from brain which code for large proteins in vitro.</title>
        <authorList>
            <person name="Nagase T."/>
            <person name="Kikuno R."/>
            <person name="Ishikawa K."/>
            <person name="Hirosawa M."/>
            <person name="Ohara O."/>
        </authorList>
    </citation>
    <scope>NUCLEOTIDE SEQUENCE [LARGE SCALE MRNA] OF 444-1244 (ISOFORM 1)</scope>
    <scope>VARIANTS ASP-565; ARG-642; ILE-732 AND THR-861</scope>
    <scope>TISSUE SPECIFICITY</scope>
    <source>
        <tissue>Brain</tissue>
    </source>
</reference>
<reference key="7">
    <citation type="journal article" date="2002" name="DNA Res.">
        <title>Construction of expression-ready cDNA clones for KIAA genes: manual curation of 330 KIAA cDNA clones.</title>
        <authorList>
            <person name="Nakajima D."/>
            <person name="Okazaki N."/>
            <person name="Yamakawa H."/>
            <person name="Kikuno R."/>
            <person name="Ohara O."/>
            <person name="Nagase T."/>
        </authorList>
    </citation>
    <scope>SEQUENCE REVISION</scope>
</reference>
<reference key="8">
    <citation type="journal article" date="2004" name="Oncogene">
        <title>Expression profiling and differential screening between hepatoblastomas and the corresponding normal livers: identification of high expression of the PLK1 oncogene as a poor-prognostic indicator of hepatoblastomas.</title>
        <authorList>
            <person name="Yamada S."/>
            <person name="Ohira M."/>
            <person name="Horie H."/>
            <person name="Ando K."/>
            <person name="Takayasu H."/>
            <person name="Suzuki Y."/>
            <person name="Sugano S."/>
            <person name="Hirata T."/>
            <person name="Goto T."/>
            <person name="Matsunaga T."/>
            <person name="Hiyama E."/>
            <person name="Hayashi Y."/>
            <person name="Ando H."/>
            <person name="Suita S."/>
            <person name="Kaneko M."/>
            <person name="Sasaki F."/>
            <person name="Hashizume K."/>
            <person name="Ohnuma N."/>
            <person name="Nakagawara A."/>
        </authorList>
    </citation>
    <scope>NUCLEOTIDE SEQUENCE [MRNA] OF 1018-1244 (ISOFORM 1)</scope>
</reference>
<reference key="9">
    <citation type="journal article" date="2005" name="J. Biol. Chem.">
        <title>Alpha-kinase 1, a new component in apical protein transport.</title>
        <authorList>
            <person name="Heine M."/>
            <person name="Cramm-Behrens C.I."/>
            <person name="Ansari A."/>
            <person name="Chu H.P."/>
            <person name="Ryazanov A.G."/>
            <person name="Naim H.Y."/>
            <person name="Jacob R."/>
        </authorList>
    </citation>
    <scope>FUNCTION</scope>
</reference>
<reference key="10">
    <citation type="journal article" date="2016" name="Sci. Rep.">
        <title>ALPK1 phosphorylates myosin IIA modulating TNF-alpha trafficking in gout flares.</title>
        <authorList>
            <person name="Lee C.P."/>
            <person name="Chiang S.L."/>
            <person name="Ko A.M."/>
            <person name="Liu Y.F."/>
            <person name="Ma C."/>
            <person name="Lu C.Y."/>
            <person name="Huang C.M."/>
            <person name="Chang J.G."/>
            <person name="Kuo T.M."/>
            <person name="Chen C.L."/>
            <person name="Tsai E.M."/>
            <person name="Ko Y.C."/>
        </authorList>
    </citation>
    <scope>FUNCTION</scope>
    <scope>CATALYTIC ACTIVITY</scope>
</reference>
<reference key="11">
    <citation type="journal article" date="2017" name="Cell Rep.">
        <title>ALPK1- and TIFA-dependent innate immune response triggered by the Helicobacter pylori type IV secretion system.</title>
        <authorList>
            <person name="Zimmermann S."/>
            <person name="Pfannkuch L."/>
            <person name="Al-Zeer M.A."/>
            <person name="Bartfeld S."/>
            <person name="Koch M."/>
            <person name="Liu J."/>
            <person name="Rechner C."/>
            <person name="Soerensen M."/>
            <person name="Sokolova O."/>
            <person name="Zamyatina A."/>
            <person name="Kosma P."/>
            <person name="Maeurer A.P."/>
            <person name="Glowinski F."/>
            <person name="Pleissner K.P."/>
            <person name="Schmid M."/>
            <person name="Brinkmann V."/>
            <person name="Karlas A."/>
            <person name="Naumann M."/>
            <person name="Rother M."/>
            <person name="Machuy N."/>
            <person name="Meyer T.F."/>
        </authorList>
    </citation>
    <scope>FUNCTION</scope>
</reference>
<reference key="12">
    <citation type="journal article" date="2017" name="PLoS Pathog.">
        <title>ALPK1 controls TIFA/TRAF6-dependent innate immunity against heptose-1,7-bisphosphate of gram-negative bacteria.</title>
        <authorList>
            <person name="Milivojevic M."/>
            <person name="Dangeard A.S."/>
            <person name="Kasper C.A."/>
            <person name="Tschon T."/>
            <person name="Emmenlauer M."/>
            <person name="Pique C."/>
            <person name="Schnupf P."/>
            <person name="Guignot J."/>
            <person name="Arrieumerlou C."/>
        </authorList>
    </citation>
    <scope>FUNCTION</scope>
</reference>
<reference key="13">
    <citation type="journal article" date="2018" name="Nature">
        <title>Alpha-kinase 1 is a cytosolic innate immune receptor for bacterial ADP-heptose.</title>
        <authorList>
            <person name="Zhou P."/>
            <person name="She Y."/>
            <person name="Dong N."/>
            <person name="Li P."/>
            <person name="He H."/>
            <person name="Borio A."/>
            <person name="Wu Q."/>
            <person name="Lu S."/>
            <person name="Ding X."/>
            <person name="Cao Y."/>
            <person name="Xu Y."/>
            <person name="Gao W."/>
            <person name="Dong M."/>
            <person name="Ding J."/>
            <person name="Wang D.C."/>
            <person name="Zamyatina A."/>
            <person name="Shao F."/>
        </authorList>
    </citation>
    <scope>X-RAY CRYSTALLOGRAPHY (2.59 ANGSTROMS) OF 1-446 IN COMPLEX WITH ADP-D-GLYCERO-BETA-D-MANNO-HEPTOSE</scope>
    <scope>FUNCTION</scope>
    <scope>CATALYTIC ACTIVITY</scope>
    <scope>ACTIVITY REGULATION</scope>
    <scope>SUBCELLULAR LOCATION</scope>
    <scope>MUTAGENESIS OF GLN-67; ARG-116; ARG-150; ARG-153; ASP-231; LYS-233; THR-237; PHE-295 AND LYS-1067</scope>
</reference>
<reference key="14">
    <citation type="journal article" date="2007" name="Nature">
        <title>Patterns of somatic mutation in human cancer genomes.</title>
        <authorList>
            <person name="Greenman C."/>
            <person name="Stephens P."/>
            <person name="Smith R."/>
            <person name="Dalgliesh G.L."/>
            <person name="Hunter C."/>
            <person name="Bignell G."/>
            <person name="Davies H."/>
            <person name="Teague J."/>
            <person name="Butler A."/>
            <person name="Stevens C."/>
            <person name="Edkins S."/>
            <person name="O'Meara S."/>
            <person name="Vastrik I."/>
            <person name="Schmidt E.E."/>
            <person name="Avis T."/>
            <person name="Barthorpe S."/>
            <person name="Bhamra G."/>
            <person name="Buck G."/>
            <person name="Choudhury B."/>
            <person name="Clements J."/>
            <person name="Cole J."/>
            <person name="Dicks E."/>
            <person name="Forbes S."/>
            <person name="Gray K."/>
            <person name="Halliday K."/>
            <person name="Harrison R."/>
            <person name="Hills K."/>
            <person name="Hinton J."/>
            <person name="Jenkinson A."/>
            <person name="Jones D."/>
            <person name="Menzies A."/>
            <person name="Mironenko T."/>
            <person name="Perry J."/>
            <person name="Raine K."/>
            <person name="Richardson D."/>
            <person name="Shepherd R."/>
            <person name="Small A."/>
            <person name="Tofts C."/>
            <person name="Varian J."/>
            <person name="Webb T."/>
            <person name="West S."/>
            <person name="Widaa S."/>
            <person name="Yates A."/>
            <person name="Cahill D.P."/>
            <person name="Louis D.N."/>
            <person name="Goldstraw P."/>
            <person name="Nicholson A.G."/>
            <person name="Brasseur F."/>
            <person name="Looijenga L."/>
            <person name="Weber B.L."/>
            <person name="Chiew Y.-E."/>
            <person name="DeFazio A."/>
            <person name="Greaves M.F."/>
            <person name="Green A.R."/>
            <person name="Campbell P."/>
            <person name="Birney E."/>
            <person name="Easton D.F."/>
            <person name="Chenevix-Trench G."/>
            <person name="Tan M.-H."/>
            <person name="Khoo S.K."/>
            <person name="Teh B.T."/>
            <person name="Yuen S.T."/>
            <person name="Leung S.Y."/>
            <person name="Wooster R."/>
            <person name="Futreal P.A."/>
            <person name="Stratton M.R."/>
        </authorList>
    </citation>
    <scope>VARIANTS [LARGE SCALE ANALYSIS] ARG-67; ASP-175; MET-292; MET-320; GLU-339; GLU-383; ASP-565; ARG-642; LEU-660; ASP-681; ILE-732; THR-861; SER-870; ILE-873; ASP-910; ASP-916; LEU-935; GLN-1084; PRO-1117 AND GLY-1160</scope>
</reference>
<reference key="15">
    <citation type="journal article" date="2019" name="Genet. Med.">
        <title>ALPK1 missense pathogenic variant in five families leads to ROSAH syndrome, an ocular multisystem autosomal dominant disorder.</title>
        <authorList>
            <person name="Williams L.B."/>
            <person name="Javed A."/>
            <person name="Sabri A."/>
            <person name="Morgan D.J."/>
            <person name="Huff C.D."/>
            <person name="Grigg J.R."/>
            <person name="Heng X.T."/>
            <person name="Khng A.J."/>
            <person name="Hollink I.H.I.M."/>
            <person name="Morrison M.A."/>
            <person name="Owen L.A."/>
            <person name="Anderson K."/>
            <person name="Kinard K."/>
            <person name="Greenlees R."/>
            <person name="Novacic D."/>
            <person name="Nida Sen H."/>
            <person name="Zein W.M."/>
            <person name="Rodgers G.M."/>
            <person name="Vitale A.T."/>
            <person name="Haider N.B."/>
            <person name="Hillmer A.M."/>
            <person name="Ng P.C."/>
            <person name="Shankar A."/>
            <person name="Cheng A."/>
            <person name="Zheng L."/>
            <person name="Gillies M.C."/>
            <person name="van Slegtenhorst M."/>
            <person name="van Hagen P.M."/>
            <person name="Missotten T.O.A.R."/>
            <person name="Farley G.L."/>
            <person name="Polo M."/>
            <person name="Malatack J."/>
            <person name="Curtin J."/>
            <person name="Martin F."/>
            <person name="Arbuckle S."/>
            <person name="Alexander S.I."/>
            <person name="Chircop M."/>
            <person name="Davila S."/>
            <person name="Digre K.B."/>
            <person name="Jamieson R.V."/>
            <person name="DeAngelis M.M."/>
        </authorList>
    </citation>
    <scope>VARIANT ROSAH MET-237</scope>
    <scope>INVOLVEMENT IN ROSAH</scope>
    <scope>TISSUE SPECIFICITY</scope>
    <scope>FUNCTION</scope>
    <scope>SUBCELLULAR LOCATION</scope>
</reference>
<reference key="16">
    <citation type="journal article" date="2020" name="J. Clin. Immunol.">
        <title>Juvenile Onset Splenomegaly and Oculopathy Due to Germline Mutation in ALPK1.</title>
        <authorList>
            <person name="Zhong L."/>
            <person name="Wang J."/>
            <person name="Wang W."/>
            <person name="Wang L."/>
            <person name="Quan M."/>
            <person name="Tang X."/>
            <person name="Gou L."/>
            <person name="Wei M."/>
            <person name="Xiao J."/>
            <person name="Zhang T."/>
            <person name="Sui R."/>
            <person name="Zhou Q."/>
            <person name="Song H."/>
        </authorList>
    </citation>
    <scope>VARIANT ROSAH MET-237</scope>
    <scope>INVOLVEMENT IN ROSAH</scope>
</reference>
<evidence type="ECO:0000255" key="1">
    <source>
        <dbReference type="PROSITE-ProRule" id="PRU00501"/>
    </source>
</evidence>
<evidence type="ECO:0000256" key="2">
    <source>
        <dbReference type="SAM" id="MobiDB-lite"/>
    </source>
</evidence>
<evidence type="ECO:0000269" key="3">
    <source>
    </source>
</evidence>
<evidence type="ECO:0000269" key="4">
    <source>
    </source>
</evidence>
<evidence type="ECO:0000269" key="5">
    <source>
    </source>
</evidence>
<evidence type="ECO:0000269" key="6">
    <source>
    </source>
</evidence>
<evidence type="ECO:0000269" key="7">
    <source>
    </source>
</evidence>
<evidence type="ECO:0000269" key="8">
    <source>
    </source>
</evidence>
<evidence type="ECO:0000269" key="9">
    <source>
    </source>
</evidence>
<evidence type="ECO:0000269" key="10">
    <source>
    </source>
</evidence>
<evidence type="ECO:0000269" key="11">
    <source>
    </source>
</evidence>
<evidence type="ECO:0000269" key="12">
    <source>
    </source>
</evidence>
<evidence type="ECO:0000269" key="13">
    <source>
    </source>
</evidence>
<evidence type="ECO:0000269" key="14">
    <source ref="5"/>
</evidence>
<evidence type="ECO:0000303" key="15">
    <source>
    </source>
</evidence>
<evidence type="ECO:0000303" key="16">
    <source>
    </source>
</evidence>
<evidence type="ECO:0000303" key="17">
    <source>
    </source>
</evidence>
<evidence type="ECO:0000303" key="18">
    <source>
    </source>
</evidence>
<evidence type="ECO:0000305" key="19"/>
<evidence type="ECO:0000312" key="20">
    <source>
        <dbReference type="HGNC" id="HGNC:20917"/>
    </source>
</evidence>
<evidence type="ECO:0007829" key="21">
    <source>
        <dbReference type="PDB" id="5Z2C"/>
    </source>
</evidence>
<protein>
    <recommendedName>
        <fullName evidence="18">Alpha-protein kinase 1</fullName>
        <ecNumber evidence="8 11">2.7.11.1</ecNumber>
    </recommendedName>
    <alternativeName>
        <fullName evidence="15">Chromosome 4 kinase</fullName>
    </alternativeName>
    <alternativeName>
        <fullName evidence="20">Lymphocyte alpha-protein kinase</fullName>
    </alternativeName>
</protein>
<accession>Q96QP1</accession>
<accession>B4E3G1</accession>
<accession>F5H138</accession>
<accession>Q68CI9</accession>
<accession>Q6P9F9</accession>
<accession>Q6ZNK4</accession>
<accession>Q9P201</accession>
<sequence>MNNQKVVAVLLQECKQVLDQLLLEAPDVSEEDKSEDQRCRALLPSELRTLIQEAKEMKWPFVPEKWQYKQAVGPEDKTNLKDVIGAGLQQLLASLRASILARDCAAAAAIVFLVDRFLYGLDVSGKLLQVAKGLHKLQPATPIAPQVVIRQARISVNSGKLLKAEYILSSLISNNGATGTWLYRNESDKVLVQSVCIQIRGQILQKLGMWYEAAELIWASIVGYLALPQPDKKGLSTSLGILADIFVSMSKNDYEKFKNNPQINLSLLKEFDHHLLSAAEACKLAAAFSAYTPLFVLTAVNIRGTCLLSYSSSNDCPPELKNLHLCEAKEAFEIGLLTKRDDEPVTGKQELHSFVKAAFGLTTVHRRLHGETGTVHAASQLCKEAMGKLYNFSTSSRSQDREALSQEVMSVIAQVKEHLQVQSFSNVDDRSYVPESFECRLDKLILHGQGDFQKILDTYSQHHTSVCEVFESDCGNNKNEQKDAKTGVCITALKTEIKNIDTVSTTQEKPHCQRDTGISSSLMGKNVQRELRRGGRRNWTHSDAFRVSLDQDVETETEPSDYSNGEGAVFNKSLSGSQTSSAWSNLSGFSSSASWEEVNYHVDDRSARKEPGKEHLVDTQCSTALSEELENDREGRAMHSLHSQLHDLSLQEPNNDNLEPSQNQPQQQMPLTPFSPHNTPGIFLAPGAGLLEGAPEGIQEVRNMGPRNTSAHSRPSYRSASWSSDSGRPKNMGTHPSVQKEEAFEIIVEFPETNCDVKDRQGKEQGEEISERGAGPTFKASPSWVDPEGETAESTEDAPLDFHRVLHNSLGNISMLPCSSFTPNWPVQNPDSRKSGGPVAEQGIDPDASTVDEEGQLLDSMDVPCTNGHGSHRLCILRQPPGQRAETPNSSVSGNILFPVLSEDCTTTEEGNQPGNMLNCSQNSSSSSVWWLKSPAFSSGSSEGDSPWSYLNSSGSSWVSLPGKMRKEILEARTLQPDDFEKLLAGVRHDWLFQRLENTGVFKPSQLHRAHSALLLKYSKKSELWTAQETIVYLGDYLTVKKKGRQRNAFWVHHLHQEEILGRYVGKDYKEQKGLWHHFTDVERQMTAQHYVTEFNKRLYEQNIPTQIFYIPSTILLILEDKTIKGCISVEPYILGEFVKLSNNTKVVKTEYKATEYGLAYGHFSYEFSNHRDVVVDLQGWVTGNGKGLIYLTDPQIHSVDQKVFTTNFGKRGIFYFFNNQHVECNEICHRLSLTRPSMEKPCT</sequence>
<proteinExistence type="evidence at protein level"/>
<dbReference type="EC" id="2.7.11.1" evidence="8 11"/>
<dbReference type="EMBL" id="AY044164">
    <property type="protein sequence ID" value="AAK94675.1"/>
    <property type="molecule type" value="mRNA"/>
</dbReference>
<dbReference type="EMBL" id="AK304708">
    <property type="protein sequence ID" value="BAG65473.1"/>
    <property type="molecule type" value="mRNA"/>
</dbReference>
<dbReference type="EMBL" id="AC004049">
    <property type="status" value="NOT_ANNOTATED_CDS"/>
    <property type="molecule type" value="Genomic_DNA"/>
</dbReference>
<dbReference type="EMBL" id="AC109347">
    <property type="status" value="NOT_ANNOTATED_CDS"/>
    <property type="molecule type" value="Genomic_DNA"/>
</dbReference>
<dbReference type="EMBL" id="BC060780">
    <property type="status" value="NOT_ANNOTATED_CDS"/>
    <property type="molecule type" value="mRNA"/>
</dbReference>
<dbReference type="EMBL" id="AK131090">
    <property type="protein sequence ID" value="BAC85140.1"/>
    <property type="status" value="ALT_SEQ"/>
    <property type="molecule type" value="mRNA"/>
</dbReference>
<dbReference type="EMBL" id="AB040960">
    <property type="protein sequence ID" value="BAA96051.1"/>
    <property type="molecule type" value="mRNA"/>
</dbReference>
<dbReference type="EMBL" id="AB075877">
    <property type="protein sequence ID" value="BAD38659.1"/>
    <property type="molecule type" value="mRNA"/>
</dbReference>
<dbReference type="CCDS" id="CCDS3697.1">
    <molecule id="Q96QP1-1"/>
</dbReference>
<dbReference type="CCDS" id="CCDS58923.1">
    <molecule id="Q96QP1-2"/>
</dbReference>
<dbReference type="RefSeq" id="NP_001095876.1">
    <molecule id="Q96QP1-1"/>
    <property type="nucleotide sequence ID" value="NM_001102406.2"/>
</dbReference>
<dbReference type="RefSeq" id="NP_001240813.1">
    <molecule id="Q96QP1-2"/>
    <property type="nucleotide sequence ID" value="NM_001253884.2"/>
</dbReference>
<dbReference type="RefSeq" id="NP_079420.3">
    <molecule id="Q96QP1-1"/>
    <property type="nucleotide sequence ID" value="NM_025144.3"/>
</dbReference>
<dbReference type="PDB" id="5Z2C">
    <property type="method" value="X-ray"/>
    <property type="resolution" value="2.59 A"/>
    <property type="chains" value="A/B/C/D/E/F/G/H/I=1-446"/>
</dbReference>
<dbReference type="PDBsum" id="5Z2C"/>
<dbReference type="SMR" id="Q96QP1"/>
<dbReference type="BioGRID" id="123183">
    <property type="interactions" value="11"/>
</dbReference>
<dbReference type="FunCoup" id="Q96QP1">
    <property type="interactions" value="268"/>
</dbReference>
<dbReference type="IntAct" id="Q96QP1">
    <property type="interactions" value="8"/>
</dbReference>
<dbReference type="STRING" id="9606.ENSP00000498374"/>
<dbReference type="BindingDB" id="Q96QP1"/>
<dbReference type="GlyGen" id="Q96QP1">
    <property type="glycosylation" value="1 site, 1 N-linked glycan (1 site)"/>
</dbReference>
<dbReference type="iPTMnet" id="Q96QP1"/>
<dbReference type="PhosphoSitePlus" id="Q96QP1"/>
<dbReference type="BioMuta" id="ALPK1"/>
<dbReference type="DMDM" id="308153632"/>
<dbReference type="jPOST" id="Q96QP1"/>
<dbReference type="MassIVE" id="Q96QP1"/>
<dbReference type="PaxDb" id="9606-ENSP00000398048"/>
<dbReference type="PeptideAtlas" id="Q96QP1"/>
<dbReference type="ProteomicsDB" id="25531"/>
<dbReference type="ProteomicsDB" id="77886">
    <molecule id="Q96QP1-1"/>
</dbReference>
<dbReference type="Antibodypedia" id="26436">
    <property type="antibodies" value="105 antibodies from 24 providers"/>
</dbReference>
<dbReference type="DNASU" id="80216"/>
<dbReference type="Ensembl" id="ENST00000177648.13">
    <molecule id="Q96QP1-1"/>
    <property type="protein sequence ID" value="ENSP00000177648.9"/>
    <property type="gene ID" value="ENSG00000073331.18"/>
</dbReference>
<dbReference type="Ensembl" id="ENST00000458497.6">
    <molecule id="Q96QP1-1"/>
    <property type="protein sequence ID" value="ENSP00000398048.1"/>
    <property type="gene ID" value="ENSG00000073331.18"/>
</dbReference>
<dbReference type="Ensembl" id="ENST00000504176.6">
    <molecule id="Q96QP1-2"/>
    <property type="protein sequence ID" value="ENSP00000426044.2"/>
    <property type="gene ID" value="ENSG00000073331.18"/>
</dbReference>
<dbReference type="Ensembl" id="ENST00000650871.1">
    <molecule id="Q96QP1-1"/>
    <property type="protein sequence ID" value="ENSP00000498374.1"/>
    <property type="gene ID" value="ENSG00000073331.18"/>
</dbReference>
<dbReference type="GeneID" id="80216"/>
<dbReference type="KEGG" id="hsa:80216"/>
<dbReference type="MANE-Select" id="ENST00000650871.1">
    <property type="protein sequence ID" value="ENSP00000498374.1"/>
    <property type="RefSeq nucleotide sequence ID" value="NM_025144.4"/>
    <property type="RefSeq protein sequence ID" value="NP_079420.3"/>
</dbReference>
<dbReference type="UCSC" id="uc003ian.5">
    <molecule id="Q96QP1-1"/>
    <property type="organism name" value="human"/>
</dbReference>
<dbReference type="AGR" id="HGNC:20917"/>
<dbReference type="CTD" id="80216"/>
<dbReference type="DisGeNET" id="80216"/>
<dbReference type="GeneCards" id="ALPK1"/>
<dbReference type="GeneReviews" id="ALPK1"/>
<dbReference type="HGNC" id="HGNC:20917">
    <property type="gene designation" value="ALPK1"/>
</dbReference>
<dbReference type="HPA" id="ENSG00000073331">
    <property type="expression patterns" value="Low tissue specificity"/>
</dbReference>
<dbReference type="MalaCards" id="ALPK1"/>
<dbReference type="MIM" id="607347">
    <property type="type" value="gene"/>
</dbReference>
<dbReference type="MIM" id="614979">
    <property type="type" value="phenotype"/>
</dbReference>
<dbReference type="neXtProt" id="NX_Q96QP1"/>
<dbReference type="OpenTargets" id="ENSG00000073331"/>
<dbReference type="Orphanet" id="313800">
    <property type="disease" value="Retinal dystrophy-optic nerve edema-splenomegaly-anhidrosis-migraine headache syndrome"/>
</dbReference>
<dbReference type="PharmGKB" id="PA134891785"/>
<dbReference type="VEuPathDB" id="HostDB:ENSG00000073331"/>
<dbReference type="eggNOG" id="ENOG502QX1X">
    <property type="taxonomic scope" value="Eukaryota"/>
</dbReference>
<dbReference type="GeneTree" id="ENSGT00940000159753"/>
<dbReference type="HOGENOM" id="CLU_007421_0_0_1"/>
<dbReference type="InParanoid" id="Q96QP1"/>
<dbReference type="OMA" id="KCNEICH"/>
<dbReference type="OrthoDB" id="301415at2759"/>
<dbReference type="PAN-GO" id="Q96QP1">
    <property type="GO annotations" value="5 GO annotations based on evolutionary models"/>
</dbReference>
<dbReference type="PhylomeDB" id="Q96QP1"/>
<dbReference type="TreeFam" id="TF316085"/>
<dbReference type="PathwayCommons" id="Q96QP1"/>
<dbReference type="Reactome" id="R-HSA-445989">
    <property type="pathway name" value="TAK1-dependent IKK and NF-kappa-B activation"/>
</dbReference>
<dbReference type="Reactome" id="R-HSA-9645460">
    <property type="pathway name" value="Alpha-protein kinase 1 signaling pathway"/>
</dbReference>
<dbReference type="SignaLink" id="Q96QP1"/>
<dbReference type="SIGNOR" id="Q96QP1"/>
<dbReference type="BioGRID-ORCS" id="80216">
    <property type="hits" value="9 hits in 1155 CRISPR screens"/>
</dbReference>
<dbReference type="CD-CODE" id="232F8A39">
    <property type="entry name" value="P-body"/>
</dbReference>
<dbReference type="ChiTaRS" id="ALPK1">
    <property type="organism name" value="human"/>
</dbReference>
<dbReference type="GeneWiki" id="ALPK1"/>
<dbReference type="GenomeRNAi" id="80216"/>
<dbReference type="Pharos" id="Q96QP1">
    <property type="development level" value="Tbio"/>
</dbReference>
<dbReference type="PRO" id="PR:Q96QP1"/>
<dbReference type="Proteomes" id="UP000005640">
    <property type="component" value="Chromosome 4"/>
</dbReference>
<dbReference type="RNAct" id="Q96QP1">
    <property type="molecule type" value="protein"/>
</dbReference>
<dbReference type="Bgee" id="ENSG00000073331">
    <property type="expression patterns" value="Expressed in buccal mucosa cell and 174 other cell types or tissues"/>
</dbReference>
<dbReference type="ExpressionAtlas" id="Q96QP1">
    <property type="expression patterns" value="baseline and differential"/>
</dbReference>
<dbReference type="GO" id="GO:0005813">
    <property type="term" value="C:centrosome"/>
    <property type="evidence" value="ECO:0000314"/>
    <property type="project" value="HPA"/>
</dbReference>
<dbReference type="GO" id="GO:0036064">
    <property type="term" value="C:ciliary basal body"/>
    <property type="evidence" value="ECO:0000314"/>
    <property type="project" value="HPA"/>
</dbReference>
<dbReference type="GO" id="GO:0005929">
    <property type="term" value="C:cilium"/>
    <property type="evidence" value="ECO:0000314"/>
    <property type="project" value="UniProtKB"/>
</dbReference>
<dbReference type="GO" id="GO:0005829">
    <property type="term" value="C:cytosol"/>
    <property type="evidence" value="ECO:0000314"/>
    <property type="project" value="UniProtKB"/>
</dbReference>
<dbReference type="GO" id="GO:0000922">
    <property type="term" value="C:spindle pole"/>
    <property type="evidence" value="ECO:0000314"/>
    <property type="project" value="UniProtKB"/>
</dbReference>
<dbReference type="GO" id="GO:0005524">
    <property type="term" value="F:ATP binding"/>
    <property type="evidence" value="ECO:0007669"/>
    <property type="project" value="InterPro"/>
</dbReference>
<dbReference type="GO" id="GO:0048029">
    <property type="term" value="F:monosaccharide binding"/>
    <property type="evidence" value="ECO:0000353"/>
    <property type="project" value="UniProtKB"/>
</dbReference>
<dbReference type="GO" id="GO:0106310">
    <property type="term" value="F:protein serine kinase activity"/>
    <property type="evidence" value="ECO:0007669"/>
    <property type="project" value="RHEA"/>
</dbReference>
<dbReference type="GO" id="GO:0004674">
    <property type="term" value="F:protein serine/threonine kinase activity"/>
    <property type="evidence" value="ECO:0000314"/>
    <property type="project" value="UniProtKB"/>
</dbReference>
<dbReference type="GO" id="GO:0060271">
    <property type="term" value="P:cilium assembly"/>
    <property type="evidence" value="ECO:0000315"/>
    <property type="project" value="UniProtKB"/>
</dbReference>
<dbReference type="GO" id="GO:0002753">
    <property type="term" value="P:cytoplasmic pattern recognition receptor signaling pathway"/>
    <property type="evidence" value="ECO:0000314"/>
    <property type="project" value="UniProtKB"/>
</dbReference>
<dbReference type="GO" id="GO:0045087">
    <property type="term" value="P:innate immune response"/>
    <property type="evidence" value="ECO:0000314"/>
    <property type="project" value="UniProtKB"/>
</dbReference>
<dbReference type="GO" id="GO:0043123">
    <property type="term" value="P:positive regulation of canonical NF-kappaB signal transduction"/>
    <property type="evidence" value="ECO:0000314"/>
    <property type="project" value="UniProtKB"/>
</dbReference>
<dbReference type="CDD" id="cd16969">
    <property type="entry name" value="Alpha_kinase_ALPK1"/>
    <property type="match status" value="1"/>
</dbReference>
<dbReference type="Gene3D" id="3.20.200.10">
    <property type="entry name" value="MHCK/EF2 kinase"/>
    <property type="match status" value="1"/>
</dbReference>
<dbReference type="Gene3D" id="3.30.200.20">
    <property type="entry name" value="Phosphorylase Kinase, domain 1"/>
    <property type="match status" value="1"/>
</dbReference>
<dbReference type="InterPro" id="IPR004166">
    <property type="entry name" value="a-kinase_dom"/>
</dbReference>
<dbReference type="InterPro" id="IPR043529">
    <property type="entry name" value="ALPK1"/>
</dbReference>
<dbReference type="InterPro" id="IPR011009">
    <property type="entry name" value="Kinase-like_dom_sf"/>
</dbReference>
<dbReference type="PANTHER" id="PTHR46747">
    <property type="entry name" value="ALPHA-PROTEIN KINASE 1"/>
    <property type="match status" value="1"/>
</dbReference>
<dbReference type="PANTHER" id="PTHR46747:SF1">
    <property type="entry name" value="ALPHA-PROTEIN KINASE 1"/>
    <property type="match status" value="1"/>
</dbReference>
<dbReference type="Pfam" id="PF02816">
    <property type="entry name" value="Alpha_kinase"/>
    <property type="match status" value="1"/>
</dbReference>
<dbReference type="SMART" id="SM00811">
    <property type="entry name" value="Alpha_kinase"/>
    <property type="match status" value="1"/>
</dbReference>
<dbReference type="SUPFAM" id="SSF56112">
    <property type="entry name" value="Protein kinase-like (PK-like)"/>
    <property type="match status" value="1"/>
</dbReference>
<dbReference type="PROSITE" id="PS51158">
    <property type="entry name" value="ALPHA_KINASE"/>
    <property type="match status" value="1"/>
</dbReference>
<feature type="chain" id="PRO_0000260028" description="Alpha-protein kinase 1">
    <location>
        <begin position="1"/>
        <end position="1244"/>
    </location>
</feature>
<feature type="domain" description="Alpha-type protein kinase" evidence="1">
    <location>
        <begin position="1017"/>
        <end position="1237"/>
    </location>
</feature>
<feature type="region of interest" description="Disordered" evidence="2">
    <location>
        <begin position="650"/>
        <end position="675"/>
    </location>
</feature>
<feature type="region of interest" description="Disordered" evidence="2">
    <location>
        <begin position="701"/>
        <end position="737"/>
    </location>
</feature>
<feature type="region of interest" description="Disordered" evidence="2">
    <location>
        <begin position="757"/>
        <end position="798"/>
    </location>
</feature>
<feature type="region of interest" description="Disordered" evidence="2">
    <location>
        <begin position="824"/>
        <end position="848"/>
    </location>
</feature>
<feature type="compositionally biased region" description="Polar residues" evidence="2">
    <location>
        <begin position="652"/>
        <end position="675"/>
    </location>
</feature>
<feature type="compositionally biased region" description="Low complexity" evidence="2">
    <location>
        <begin position="713"/>
        <end position="726"/>
    </location>
</feature>
<feature type="compositionally biased region" description="Basic and acidic residues" evidence="2">
    <location>
        <begin position="757"/>
        <end position="771"/>
    </location>
</feature>
<feature type="compositionally biased region" description="Acidic residues" evidence="2">
    <location>
        <begin position="787"/>
        <end position="798"/>
    </location>
</feature>
<feature type="binding site" evidence="11">
    <location>
        <position position="61"/>
    </location>
    <ligand>
        <name>ADP-D-glycero-beta-D-manno-heptose</name>
        <dbReference type="ChEBI" id="CHEBI:59967"/>
    </ligand>
</feature>
<feature type="binding site" evidence="11">
    <location>
        <position position="67"/>
    </location>
    <ligand>
        <name>ADP-D-glycero-beta-D-manno-heptose</name>
        <dbReference type="ChEBI" id="CHEBI:59967"/>
    </ligand>
</feature>
<feature type="binding site" evidence="11">
    <location>
        <position position="116"/>
    </location>
    <ligand>
        <name>ADP-D-glycero-beta-D-manno-heptose</name>
        <dbReference type="ChEBI" id="CHEBI:59967"/>
    </ligand>
</feature>
<feature type="binding site" evidence="11">
    <location>
        <begin position="150"/>
        <end position="153"/>
    </location>
    <ligand>
        <name>ADP-D-glycero-beta-D-manno-heptose</name>
        <dbReference type="ChEBI" id="CHEBI:59967"/>
    </ligand>
</feature>
<feature type="binding site" evidence="11">
    <location>
        <position position="231"/>
    </location>
    <ligand>
        <name>ADP-D-glycero-beta-D-manno-heptose</name>
        <dbReference type="ChEBI" id="CHEBI:59967"/>
    </ligand>
</feature>
<feature type="binding site" evidence="11">
    <location>
        <position position="233"/>
    </location>
    <ligand>
        <name>ADP-D-glycero-beta-D-manno-heptose</name>
        <dbReference type="ChEBI" id="CHEBI:59967"/>
    </ligand>
</feature>
<feature type="binding site" evidence="11">
    <location>
        <begin position="236"/>
        <end position="237"/>
    </location>
    <ligand>
        <name>ADP-D-glycero-beta-D-manno-heptose</name>
        <dbReference type="ChEBI" id="CHEBI:59967"/>
    </ligand>
</feature>
<feature type="binding site" evidence="11">
    <location>
        <position position="295"/>
    </location>
    <ligand>
        <name>ADP-D-glycero-beta-D-manno-heptose</name>
        <dbReference type="ChEBI" id="CHEBI:59967"/>
    </ligand>
</feature>
<feature type="splice variant" id="VSP_044735" description="In isoform 2." evidence="17">
    <original>MNNQKVVAVLLQECKQVLDQLLLEAPDVSEEDKSEDQRCRALLPSELRTLIQEAKEMKWPFVPEKWQYKQAVGPEDKTNLKDVIGAGLQQLL</original>
    <variation>MCRKRTRARTSAAE</variation>
    <location>
        <begin position="1"/>
        <end position="92"/>
    </location>
</feature>
<feature type="sequence variant" id="VAR_041511" description="In dbSNP:rs33943680." evidence="7">
    <original>Q</original>
    <variation>R</variation>
    <location>
        <position position="67"/>
    </location>
</feature>
<feature type="sequence variant" id="VAR_028982" description="In dbSNP:rs6533616." evidence="7">
    <original>N</original>
    <variation>D</variation>
    <location>
        <position position="175"/>
    </location>
</feature>
<feature type="sequence variant" id="VAR_084993" description="In ROSAH." evidence="12 13">
    <original>T</original>
    <variation>M</variation>
    <location>
        <position position="237"/>
    </location>
</feature>
<feature type="sequence variant" id="VAR_041512" description="In dbSNP:rs34120296." evidence="7">
    <original>T</original>
    <variation>M</variation>
    <location>
        <position position="292"/>
    </location>
</feature>
<feature type="sequence variant" id="VAR_041513" description="In dbSNP:rs757602009." evidence="7">
    <original>L</original>
    <variation>M</variation>
    <location>
        <position position="320"/>
    </location>
</feature>
<feature type="sequence variant" id="VAR_041514" description="In an ovarian mucinous carcinoma sample; somatic mutation." evidence="7">
    <original>K</original>
    <variation>E</variation>
    <location>
        <position position="339"/>
    </location>
</feature>
<feature type="sequence variant" id="VAR_041515" description="In dbSNP:rs147641444." evidence="7">
    <original>K</original>
    <variation>E</variation>
    <location>
        <position position="383"/>
    </location>
</feature>
<feature type="sequence variant" id="VAR_028983" description="In dbSNP:rs2074388." evidence="3 4 5 7 14">
    <original>G</original>
    <variation>D</variation>
    <location>
        <position position="565"/>
    </location>
</feature>
<feature type="sequence variant" id="VAR_028984" description="In dbSNP:rs13148353." evidence="3 4 5 7 14">
    <original>H</original>
    <variation>R</variation>
    <location>
        <position position="642"/>
    </location>
</feature>
<feature type="sequence variant" id="VAR_041516" description="In dbSNP:rs35389530." evidence="7">
    <original>P</original>
    <variation>L</variation>
    <location>
        <position position="660"/>
    </location>
</feature>
<feature type="sequence variant" id="VAR_041517" description="In dbSNP:rs35519493." evidence="5 7">
    <original>G</original>
    <variation>D</variation>
    <location>
        <position position="681"/>
    </location>
</feature>
<feature type="sequence variant" id="VAR_028985" description="In dbSNP:rs2074379." evidence="3 4 5 7 14">
    <original>M</original>
    <variation>I</variation>
    <location>
        <position position="732"/>
    </location>
</feature>
<feature type="sequence variant" id="VAR_028986" description="In dbSNP:rs11726117." evidence="3 4 5 7 14">
    <original>M</original>
    <variation>T</variation>
    <location>
        <position position="861"/>
    </location>
</feature>
<feature type="sequence variant" id="VAR_028987" description="In dbSNP:rs2074380." evidence="7">
    <original>G</original>
    <variation>S</variation>
    <location>
        <position position="870"/>
    </location>
</feature>
<feature type="sequence variant" id="VAR_041518" description="In dbSNP:rs34946272." evidence="7">
    <original>R</original>
    <variation>I</variation>
    <location>
        <position position="873"/>
    </location>
</feature>
<feature type="sequence variant" id="VAR_041519" description="In dbSNP:rs35308602." evidence="7">
    <original>E</original>
    <variation>D</variation>
    <location>
        <position position="910"/>
    </location>
</feature>
<feature type="sequence variant" id="VAR_028988" description="In dbSNP:rs2074381." evidence="7">
    <original>N</original>
    <variation>D</variation>
    <location>
        <position position="916"/>
    </location>
</feature>
<feature type="sequence variant" id="VAR_041520" description="In dbSNP:rs34780600." evidence="7">
    <original>P</original>
    <variation>L</variation>
    <location>
        <position position="935"/>
    </location>
</feature>
<feature type="sequence variant" id="VAR_057741" description="In dbSNP:rs34079946.">
    <original>H</original>
    <variation>P</variation>
    <location>
        <position position="1008"/>
    </location>
</feature>
<feature type="sequence variant" id="VAR_041521" description="In dbSNP:rs34677416." evidence="7">
    <original>R</original>
    <variation>Q</variation>
    <location>
        <position position="1084"/>
    </location>
</feature>
<feature type="sequence variant" id="VAR_041522" description="In dbSNP:rs35756863." evidence="7">
    <original>L</original>
    <variation>P</variation>
    <location>
        <position position="1117"/>
    </location>
</feature>
<feature type="sequence variant" id="VAR_041523" description="In dbSNP:rs55696324." evidence="7">
    <original>A</original>
    <variation>G</variation>
    <location>
        <position position="1160"/>
    </location>
</feature>
<feature type="mutagenesis site" description="Impaired ADP-D-glycero-beta-D-manno-heptose-binding and ability to activate the serine/threonine-protein kinase activity; when associated with A-231." evidence="11">
    <original>Q</original>
    <variation>A</variation>
    <location>
        <position position="67"/>
    </location>
</feature>
<feature type="mutagenesis site" description="Impaired ADP-D-glycero-beta-D-manno-heptose-binding and ability to activate the serine/threonine-protein kinase activity." evidence="11">
    <original>R</original>
    <variation>A</variation>
    <location>
        <position position="116"/>
    </location>
</feature>
<feature type="mutagenesis site" description="Impaired ADP-D-glycero-beta-D-manno-heptose-binding and ability to activate the serine/threonine-protein kinase activity." evidence="11">
    <original>R</original>
    <variation>A</variation>
    <location>
        <position position="150"/>
    </location>
</feature>
<feature type="mutagenesis site" description="Impaired ADP-D-glycero-beta-D-manno-heptose-binding and ability to activate the serine/threonine-protein kinase activity." evidence="11">
    <original>R</original>
    <variation>A</variation>
    <location>
        <position position="153"/>
    </location>
</feature>
<feature type="mutagenesis site" description="Impaired ADP-D-glycero-beta-D-manno-heptose-binding and ability to activate the serine/threonine-protein kinase activity; when associated with A-67." evidence="11">
    <original>D</original>
    <variation>A</variation>
    <location>
        <position position="231"/>
    </location>
</feature>
<feature type="mutagenesis site" description="Impaired ADP-D-glycero-beta-D-manno-heptose-binding and ability to activate the serine/threonine-protein kinase activity." evidence="11">
    <original>K</original>
    <variation>A</variation>
    <location>
        <position position="233"/>
    </location>
</feature>
<feature type="mutagenesis site" description="Impaired ADP-D-glycero-beta-D-manno-heptose-binding and ability to activate the serine/threonine-protein kinase activity; when associated with K-295." evidence="11">
    <original>T</original>
    <variation>E</variation>
    <location>
        <position position="237"/>
    </location>
</feature>
<feature type="mutagenesis site" description="Impaired ADP-D-glycero-beta-D-manno-heptose-binding and ability to activate the serine/threonine-protein kinase activity; when associated with E-237." evidence="11">
    <original>F</original>
    <variation>K</variation>
    <location>
        <position position="295"/>
    </location>
</feature>
<feature type="mutagenesis site" description="Abolishes the serine/threonine-protein kinase and ability to initiate the innate immune response." evidence="11">
    <original>K</original>
    <variation>M</variation>
    <location>
        <position position="1067"/>
    </location>
</feature>
<feature type="sequence conflict" description="In Ref. 5; BAC85140." evidence="19" ref="5">
    <original>V</original>
    <variation>L</variation>
    <location>
        <position position="83"/>
    </location>
</feature>
<feature type="sequence conflict" description="In Ref. 2; BAG65473." evidence="19" ref="2">
    <original>S</original>
    <variation>G</variation>
    <location>
        <position position="577"/>
    </location>
</feature>
<feature type="helix" evidence="21">
    <location>
        <begin position="4"/>
        <end position="23"/>
    </location>
</feature>
<feature type="helix" evidence="21">
    <location>
        <begin position="30"/>
        <end position="41"/>
    </location>
</feature>
<feature type="helix" evidence="21">
    <location>
        <begin position="45"/>
        <end position="55"/>
    </location>
</feature>
<feature type="turn" evidence="21">
    <location>
        <begin position="65"/>
        <end position="67"/>
    </location>
</feature>
<feature type="helix" evidence="21">
    <location>
        <begin position="74"/>
        <end position="76"/>
    </location>
</feature>
<feature type="helix" evidence="21">
    <location>
        <begin position="80"/>
        <end position="86"/>
    </location>
</feature>
<feature type="helix" evidence="21">
    <location>
        <begin position="88"/>
        <end position="100"/>
    </location>
</feature>
<feature type="helix" evidence="21">
    <location>
        <begin position="104"/>
        <end position="120"/>
    </location>
</feature>
<feature type="helix" evidence="21">
    <location>
        <begin position="124"/>
        <end position="137"/>
    </location>
</feature>
<feature type="helix" evidence="21">
    <location>
        <begin position="145"/>
        <end position="157"/>
    </location>
</feature>
<feature type="helix" evidence="21">
    <location>
        <begin position="161"/>
        <end position="173"/>
    </location>
</feature>
<feature type="turn" evidence="21">
    <location>
        <begin position="174"/>
        <end position="176"/>
    </location>
</feature>
<feature type="strand" evidence="21">
    <location>
        <begin position="184"/>
        <end position="186"/>
    </location>
</feature>
<feature type="helix" evidence="21">
    <location>
        <begin position="187"/>
        <end position="206"/>
    </location>
</feature>
<feature type="helix" evidence="21">
    <location>
        <begin position="210"/>
        <end position="225"/>
    </location>
</feature>
<feature type="strand" evidence="21">
    <location>
        <begin position="227"/>
        <end position="229"/>
    </location>
</feature>
<feature type="helix" evidence="21">
    <location>
        <begin position="232"/>
        <end position="248"/>
    </location>
</feature>
<feature type="helix" evidence="21">
    <location>
        <begin position="251"/>
        <end position="258"/>
    </location>
</feature>
<feature type="helix" evidence="21">
    <location>
        <begin position="266"/>
        <end position="270"/>
    </location>
</feature>
<feature type="helix" evidence="21">
    <location>
        <begin position="274"/>
        <end position="288"/>
    </location>
</feature>
<feature type="turn" evidence="21">
    <location>
        <begin position="289"/>
        <end position="291"/>
    </location>
</feature>
<feature type="helix" evidence="21">
    <location>
        <begin position="293"/>
        <end position="311"/>
    </location>
</feature>
<feature type="helix" evidence="21">
    <location>
        <begin position="318"/>
        <end position="337"/>
    </location>
</feature>
<feature type="helix" evidence="21">
    <location>
        <begin position="348"/>
        <end position="369"/>
    </location>
</feature>
<feature type="helix" evidence="21">
    <location>
        <begin position="373"/>
        <end position="394"/>
    </location>
</feature>
<feature type="helix" evidence="21">
    <location>
        <begin position="398"/>
        <end position="418"/>
    </location>
</feature>
<feature type="helix" evidence="21">
    <location>
        <begin position="442"/>
        <end position="444"/>
    </location>
</feature>
<keyword id="KW-0002">3D-structure</keyword>
<keyword id="KW-0025">Alternative splicing</keyword>
<keyword id="KW-0966">Cell projection</keyword>
<keyword id="KW-0970">Cilium biogenesis/degradation</keyword>
<keyword id="KW-0963">Cytoplasm</keyword>
<keyword id="KW-0206">Cytoskeleton</keyword>
<keyword id="KW-0225">Disease variant</keyword>
<keyword id="KW-0391">Immunity</keyword>
<keyword id="KW-0399">Innate immunity</keyword>
<keyword id="KW-0418">Kinase</keyword>
<keyword id="KW-1267">Proteomics identification</keyword>
<keyword id="KW-1185">Reference proteome</keyword>
<keyword id="KW-0723">Serine/threonine-protein kinase</keyword>
<keyword id="KW-0808">Transferase</keyword>
<gene>
    <name evidence="18 20" type="primary">ALPK1</name>
    <name evidence="16" type="synonym">KIAA1527</name>
    <name evidence="20" type="synonym">LAK</name>
</gene>
<name>ALPK1_HUMAN</name>